<organism>
    <name type="scientific">Methanosphaera stadtmanae (strain ATCC 43021 / DSM 3091 / JCM 11832 / MCB-3)</name>
    <dbReference type="NCBI Taxonomy" id="339860"/>
    <lineage>
        <taxon>Archaea</taxon>
        <taxon>Methanobacteriati</taxon>
        <taxon>Methanobacteriota</taxon>
        <taxon>Methanomada group</taxon>
        <taxon>Methanobacteria</taxon>
        <taxon>Methanobacteriales</taxon>
        <taxon>Methanobacteriaceae</taxon>
        <taxon>Methanosphaera</taxon>
    </lineage>
</organism>
<dbReference type="EMBL" id="CP000102">
    <property type="protein sequence ID" value="ABC57669.1"/>
    <property type="molecule type" value="Genomic_DNA"/>
</dbReference>
<dbReference type="RefSeq" id="WP_011406868.1">
    <property type="nucleotide sequence ID" value="NC_007681.1"/>
</dbReference>
<dbReference type="SMR" id="Q2NET4"/>
<dbReference type="STRING" id="339860.Msp_1292"/>
<dbReference type="KEGG" id="mst:Msp_1292"/>
<dbReference type="eggNOG" id="arCOG04049">
    <property type="taxonomic scope" value="Archaea"/>
</dbReference>
<dbReference type="HOGENOM" id="CLU_205640_0_0_2"/>
<dbReference type="OrthoDB" id="45138at2157"/>
<dbReference type="Proteomes" id="UP000001931">
    <property type="component" value="Chromosome"/>
</dbReference>
<dbReference type="GO" id="GO:1990904">
    <property type="term" value="C:ribonucleoprotein complex"/>
    <property type="evidence" value="ECO:0007669"/>
    <property type="project" value="UniProtKB-KW"/>
</dbReference>
<dbReference type="GO" id="GO:0005840">
    <property type="term" value="C:ribosome"/>
    <property type="evidence" value="ECO:0007669"/>
    <property type="project" value="UniProtKB-KW"/>
</dbReference>
<dbReference type="GO" id="GO:0003735">
    <property type="term" value="F:structural constituent of ribosome"/>
    <property type="evidence" value="ECO:0007669"/>
    <property type="project" value="InterPro"/>
</dbReference>
<dbReference type="GO" id="GO:0006412">
    <property type="term" value="P:translation"/>
    <property type="evidence" value="ECO:0007669"/>
    <property type="project" value="UniProtKB-UniRule"/>
</dbReference>
<dbReference type="Gene3D" id="4.10.1060.50">
    <property type="match status" value="1"/>
</dbReference>
<dbReference type="HAMAP" id="MF_00788">
    <property type="entry name" value="Ribosomal_eL40"/>
    <property type="match status" value="1"/>
</dbReference>
<dbReference type="InterPro" id="IPR023657">
    <property type="entry name" value="Ribosomal_eL40_arc"/>
</dbReference>
<dbReference type="InterPro" id="IPR001975">
    <property type="entry name" value="Ribosomal_eL40_dom"/>
</dbReference>
<dbReference type="InterPro" id="IPR038587">
    <property type="entry name" value="Ribosomal_eL40_sf"/>
</dbReference>
<dbReference type="InterPro" id="IPR011332">
    <property type="entry name" value="Ribosomal_zn-bd"/>
</dbReference>
<dbReference type="InterPro" id="IPR026870">
    <property type="entry name" value="Zinc_ribbon_dom"/>
</dbReference>
<dbReference type="NCBIfam" id="NF003161">
    <property type="entry name" value="PRK04136.1"/>
    <property type="match status" value="1"/>
</dbReference>
<dbReference type="PANTHER" id="PTHR39649">
    <property type="entry name" value="50S RIBOSOMAL PROTEIN L40E"/>
    <property type="match status" value="1"/>
</dbReference>
<dbReference type="PANTHER" id="PTHR39649:SF1">
    <property type="entry name" value="LARGE RIBOSOMAL SUBUNIT PROTEIN EL40"/>
    <property type="match status" value="1"/>
</dbReference>
<dbReference type="Pfam" id="PF13240">
    <property type="entry name" value="Zn_Ribbon_1"/>
    <property type="match status" value="1"/>
</dbReference>
<dbReference type="SMART" id="SM01377">
    <property type="entry name" value="Ribosomal_L40e"/>
    <property type="match status" value="1"/>
</dbReference>
<dbReference type="SUPFAM" id="SSF57829">
    <property type="entry name" value="Zn-binding ribosomal proteins"/>
    <property type="match status" value="1"/>
</dbReference>
<name>RL40_METST</name>
<evidence type="ECO:0000255" key="1">
    <source>
        <dbReference type="HAMAP-Rule" id="MF_00788"/>
    </source>
</evidence>
<evidence type="ECO:0000305" key="2"/>
<sequence length="48" mass="5482">MAKFEEAENRMFNIKICLKCNARNPATAKSCRKCGYTGLRFKAKEPRG</sequence>
<comment type="similarity">
    <text evidence="1">Belongs to the eukaryotic ribosomal protein eL40 family.</text>
</comment>
<accession>Q2NET4</accession>
<feature type="chain" id="PRO_1000046888" description="Large ribosomal subunit protein eL40">
    <location>
        <begin position="1"/>
        <end position="48"/>
    </location>
</feature>
<keyword id="KW-1185">Reference proteome</keyword>
<keyword id="KW-0687">Ribonucleoprotein</keyword>
<keyword id="KW-0689">Ribosomal protein</keyword>
<gene>
    <name evidence="1" type="primary">rpl40e</name>
    <name type="ordered locus">Msp_1292</name>
</gene>
<proteinExistence type="inferred from homology"/>
<protein>
    <recommendedName>
        <fullName evidence="1">Large ribosomal subunit protein eL40</fullName>
    </recommendedName>
    <alternativeName>
        <fullName evidence="2">50S ribosomal protein L40e</fullName>
    </alternativeName>
</protein>
<reference key="1">
    <citation type="journal article" date="2006" name="J. Bacteriol.">
        <title>The genome sequence of Methanosphaera stadtmanae reveals why this human intestinal archaeon is restricted to methanol and H2 for methane formation and ATP synthesis.</title>
        <authorList>
            <person name="Fricke W.F."/>
            <person name="Seedorf H."/>
            <person name="Henne A."/>
            <person name="Kruer M."/>
            <person name="Liesegang H."/>
            <person name="Hedderich R."/>
            <person name="Gottschalk G."/>
            <person name="Thauer R.K."/>
        </authorList>
    </citation>
    <scope>NUCLEOTIDE SEQUENCE [LARGE SCALE GENOMIC DNA]</scope>
    <source>
        <strain>ATCC 43021 / DSM 3091 / JCM 11832 / MCB-3</strain>
    </source>
</reference>